<protein>
    <recommendedName>
        <fullName evidence="1">Adenylosuccinate synthetase</fullName>
        <shortName evidence="1">AMPSase</shortName>
        <shortName evidence="1">AdSS</shortName>
        <ecNumber evidence="1">6.3.4.4</ecNumber>
    </recommendedName>
    <alternativeName>
        <fullName evidence="1">IMP--aspartate ligase</fullName>
    </alternativeName>
</protein>
<comment type="function">
    <text evidence="1">Plays an important role in the de novo pathway of purine nucleotide biosynthesis. Catalyzes the first committed step in the biosynthesis of AMP from IMP.</text>
</comment>
<comment type="catalytic activity">
    <reaction evidence="1">
        <text>IMP + L-aspartate + GTP = N(6)-(1,2-dicarboxyethyl)-AMP + GDP + phosphate + 2 H(+)</text>
        <dbReference type="Rhea" id="RHEA:15753"/>
        <dbReference type="ChEBI" id="CHEBI:15378"/>
        <dbReference type="ChEBI" id="CHEBI:29991"/>
        <dbReference type="ChEBI" id="CHEBI:37565"/>
        <dbReference type="ChEBI" id="CHEBI:43474"/>
        <dbReference type="ChEBI" id="CHEBI:57567"/>
        <dbReference type="ChEBI" id="CHEBI:58053"/>
        <dbReference type="ChEBI" id="CHEBI:58189"/>
        <dbReference type="EC" id="6.3.4.4"/>
    </reaction>
</comment>
<comment type="cofactor">
    <cofactor evidence="1">
        <name>Mg(2+)</name>
        <dbReference type="ChEBI" id="CHEBI:18420"/>
    </cofactor>
    <text evidence="1">Binds 1 Mg(2+) ion per subunit.</text>
</comment>
<comment type="pathway">
    <text evidence="1">Purine metabolism; AMP biosynthesis via de novo pathway; AMP from IMP: step 1/2.</text>
</comment>
<comment type="subunit">
    <text evidence="1">Homodimer.</text>
</comment>
<comment type="subcellular location">
    <subcellularLocation>
        <location evidence="1">Cytoplasm</location>
    </subcellularLocation>
</comment>
<comment type="similarity">
    <text evidence="1">Belongs to the adenylosuccinate synthetase family.</text>
</comment>
<name>PURA_HISS1</name>
<proteinExistence type="inferred from homology"/>
<evidence type="ECO:0000255" key="1">
    <source>
        <dbReference type="HAMAP-Rule" id="MF_00011"/>
    </source>
</evidence>
<dbReference type="EC" id="6.3.4.4" evidence="1"/>
<dbReference type="EMBL" id="CP000436">
    <property type="protein sequence ID" value="ABI25603.1"/>
    <property type="molecule type" value="Genomic_DNA"/>
</dbReference>
<dbReference type="SMR" id="Q0I4Q5"/>
<dbReference type="KEGG" id="hso:HS_1328"/>
<dbReference type="eggNOG" id="COG0104">
    <property type="taxonomic scope" value="Bacteria"/>
</dbReference>
<dbReference type="HOGENOM" id="CLU_029848_0_0_6"/>
<dbReference type="UniPathway" id="UPA00075">
    <property type="reaction ID" value="UER00335"/>
</dbReference>
<dbReference type="GO" id="GO:0005737">
    <property type="term" value="C:cytoplasm"/>
    <property type="evidence" value="ECO:0007669"/>
    <property type="project" value="UniProtKB-SubCell"/>
</dbReference>
<dbReference type="GO" id="GO:0004019">
    <property type="term" value="F:adenylosuccinate synthase activity"/>
    <property type="evidence" value="ECO:0007669"/>
    <property type="project" value="UniProtKB-UniRule"/>
</dbReference>
<dbReference type="GO" id="GO:0005525">
    <property type="term" value="F:GTP binding"/>
    <property type="evidence" value="ECO:0007669"/>
    <property type="project" value="UniProtKB-UniRule"/>
</dbReference>
<dbReference type="GO" id="GO:0000287">
    <property type="term" value="F:magnesium ion binding"/>
    <property type="evidence" value="ECO:0007669"/>
    <property type="project" value="UniProtKB-UniRule"/>
</dbReference>
<dbReference type="GO" id="GO:0044208">
    <property type="term" value="P:'de novo' AMP biosynthetic process"/>
    <property type="evidence" value="ECO:0007669"/>
    <property type="project" value="UniProtKB-UniRule"/>
</dbReference>
<dbReference type="GO" id="GO:0046040">
    <property type="term" value="P:IMP metabolic process"/>
    <property type="evidence" value="ECO:0007669"/>
    <property type="project" value="TreeGrafter"/>
</dbReference>
<dbReference type="CDD" id="cd03108">
    <property type="entry name" value="AdSS"/>
    <property type="match status" value="1"/>
</dbReference>
<dbReference type="FunFam" id="1.10.300.10:FF:000001">
    <property type="entry name" value="Adenylosuccinate synthetase"/>
    <property type="match status" value="1"/>
</dbReference>
<dbReference type="FunFam" id="3.90.170.10:FF:000001">
    <property type="entry name" value="Adenylosuccinate synthetase"/>
    <property type="match status" value="1"/>
</dbReference>
<dbReference type="Gene3D" id="3.40.440.10">
    <property type="entry name" value="Adenylosuccinate Synthetase, subunit A, domain 1"/>
    <property type="match status" value="1"/>
</dbReference>
<dbReference type="Gene3D" id="1.10.300.10">
    <property type="entry name" value="Adenylosuccinate Synthetase, subunit A, domain 2"/>
    <property type="match status" value="1"/>
</dbReference>
<dbReference type="Gene3D" id="3.90.170.10">
    <property type="entry name" value="Adenylosuccinate Synthetase, subunit A, domain 3"/>
    <property type="match status" value="1"/>
</dbReference>
<dbReference type="HAMAP" id="MF_00011">
    <property type="entry name" value="Adenylosucc_synth"/>
    <property type="match status" value="1"/>
</dbReference>
<dbReference type="InterPro" id="IPR018220">
    <property type="entry name" value="Adenylosuccin_syn_GTP-bd"/>
</dbReference>
<dbReference type="InterPro" id="IPR033128">
    <property type="entry name" value="Adenylosuccin_syn_Lys_AS"/>
</dbReference>
<dbReference type="InterPro" id="IPR042109">
    <property type="entry name" value="Adenylosuccinate_synth_dom1"/>
</dbReference>
<dbReference type="InterPro" id="IPR042110">
    <property type="entry name" value="Adenylosuccinate_synth_dom2"/>
</dbReference>
<dbReference type="InterPro" id="IPR042111">
    <property type="entry name" value="Adenylosuccinate_synth_dom3"/>
</dbReference>
<dbReference type="InterPro" id="IPR001114">
    <property type="entry name" value="Adenylosuccinate_synthetase"/>
</dbReference>
<dbReference type="InterPro" id="IPR027417">
    <property type="entry name" value="P-loop_NTPase"/>
</dbReference>
<dbReference type="NCBIfam" id="NF002223">
    <property type="entry name" value="PRK01117.1"/>
    <property type="match status" value="1"/>
</dbReference>
<dbReference type="NCBIfam" id="TIGR00184">
    <property type="entry name" value="purA"/>
    <property type="match status" value="1"/>
</dbReference>
<dbReference type="PANTHER" id="PTHR11846">
    <property type="entry name" value="ADENYLOSUCCINATE SYNTHETASE"/>
    <property type="match status" value="1"/>
</dbReference>
<dbReference type="PANTHER" id="PTHR11846:SF0">
    <property type="entry name" value="ADENYLOSUCCINATE SYNTHETASE"/>
    <property type="match status" value="1"/>
</dbReference>
<dbReference type="Pfam" id="PF00709">
    <property type="entry name" value="Adenylsucc_synt"/>
    <property type="match status" value="1"/>
</dbReference>
<dbReference type="SMART" id="SM00788">
    <property type="entry name" value="Adenylsucc_synt"/>
    <property type="match status" value="1"/>
</dbReference>
<dbReference type="SUPFAM" id="SSF52540">
    <property type="entry name" value="P-loop containing nucleoside triphosphate hydrolases"/>
    <property type="match status" value="1"/>
</dbReference>
<dbReference type="PROSITE" id="PS01266">
    <property type="entry name" value="ADENYLOSUCCIN_SYN_1"/>
    <property type="match status" value="1"/>
</dbReference>
<dbReference type="PROSITE" id="PS00513">
    <property type="entry name" value="ADENYLOSUCCIN_SYN_2"/>
    <property type="match status" value="1"/>
</dbReference>
<organism>
    <name type="scientific">Histophilus somni (strain 129Pt)</name>
    <name type="common">Haemophilus somnus</name>
    <dbReference type="NCBI Taxonomy" id="205914"/>
    <lineage>
        <taxon>Bacteria</taxon>
        <taxon>Pseudomonadati</taxon>
        <taxon>Pseudomonadota</taxon>
        <taxon>Gammaproteobacteria</taxon>
        <taxon>Pasteurellales</taxon>
        <taxon>Pasteurellaceae</taxon>
        <taxon>Histophilus</taxon>
    </lineage>
</organism>
<feature type="chain" id="PRO_1000000833" description="Adenylosuccinate synthetase">
    <location>
        <begin position="1"/>
        <end position="432"/>
    </location>
</feature>
<feature type="active site" description="Proton acceptor" evidence="1">
    <location>
        <position position="14"/>
    </location>
</feature>
<feature type="active site" description="Proton donor" evidence="1">
    <location>
        <position position="42"/>
    </location>
</feature>
<feature type="binding site" evidence="1">
    <location>
        <begin position="13"/>
        <end position="19"/>
    </location>
    <ligand>
        <name>GTP</name>
        <dbReference type="ChEBI" id="CHEBI:37565"/>
    </ligand>
</feature>
<feature type="binding site" description="in other chain" evidence="1">
    <location>
        <begin position="14"/>
        <end position="17"/>
    </location>
    <ligand>
        <name>IMP</name>
        <dbReference type="ChEBI" id="CHEBI:58053"/>
        <note>ligand shared between dimeric partners</note>
    </ligand>
</feature>
<feature type="binding site" evidence="1">
    <location>
        <position position="14"/>
    </location>
    <ligand>
        <name>Mg(2+)</name>
        <dbReference type="ChEBI" id="CHEBI:18420"/>
    </ligand>
</feature>
<feature type="binding site" description="in other chain" evidence="1">
    <location>
        <begin position="39"/>
        <end position="42"/>
    </location>
    <ligand>
        <name>IMP</name>
        <dbReference type="ChEBI" id="CHEBI:58053"/>
        <note>ligand shared between dimeric partners</note>
    </ligand>
</feature>
<feature type="binding site" evidence="1">
    <location>
        <begin position="41"/>
        <end position="43"/>
    </location>
    <ligand>
        <name>GTP</name>
        <dbReference type="ChEBI" id="CHEBI:37565"/>
    </ligand>
</feature>
<feature type="binding site" evidence="1">
    <location>
        <position position="41"/>
    </location>
    <ligand>
        <name>Mg(2+)</name>
        <dbReference type="ChEBI" id="CHEBI:18420"/>
    </ligand>
</feature>
<feature type="binding site" description="in other chain" evidence="1">
    <location>
        <position position="130"/>
    </location>
    <ligand>
        <name>IMP</name>
        <dbReference type="ChEBI" id="CHEBI:58053"/>
        <note>ligand shared between dimeric partners</note>
    </ligand>
</feature>
<feature type="binding site" evidence="1">
    <location>
        <position position="144"/>
    </location>
    <ligand>
        <name>IMP</name>
        <dbReference type="ChEBI" id="CHEBI:58053"/>
        <note>ligand shared between dimeric partners</note>
    </ligand>
</feature>
<feature type="binding site" description="in other chain" evidence="1">
    <location>
        <position position="225"/>
    </location>
    <ligand>
        <name>IMP</name>
        <dbReference type="ChEBI" id="CHEBI:58053"/>
        <note>ligand shared between dimeric partners</note>
    </ligand>
</feature>
<feature type="binding site" description="in other chain" evidence="1">
    <location>
        <position position="240"/>
    </location>
    <ligand>
        <name>IMP</name>
        <dbReference type="ChEBI" id="CHEBI:58053"/>
        <note>ligand shared between dimeric partners</note>
    </ligand>
</feature>
<feature type="binding site" evidence="1">
    <location>
        <begin position="300"/>
        <end position="306"/>
    </location>
    <ligand>
        <name>substrate</name>
    </ligand>
</feature>
<feature type="binding site" description="in other chain" evidence="1">
    <location>
        <position position="304"/>
    </location>
    <ligand>
        <name>IMP</name>
        <dbReference type="ChEBI" id="CHEBI:58053"/>
        <note>ligand shared between dimeric partners</note>
    </ligand>
</feature>
<feature type="binding site" evidence="1">
    <location>
        <position position="306"/>
    </location>
    <ligand>
        <name>GTP</name>
        <dbReference type="ChEBI" id="CHEBI:37565"/>
    </ligand>
</feature>
<feature type="binding site" evidence="1">
    <location>
        <begin position="332"/>
        <end position="334"/>
    </location>
    <ligand>
        <name>GTP</name>
        <dbReference type="ChEBI" id="CHEBI:37565"/>
    </ligand>
</feature>
<feature type="binding site" evidence="1">
    <location>
        <begin position="415"/>
        <end position="417"/>
    </location>
    <ligand>
        <name>GTP</name>
        <dbReference type="ChEBI" id="CHEBI:37565"/>
    </ligand>
</feature>
<reference key="1">
    <citation type="journal article" date="2007" name="J. Bacteriol.">
        <title>Complete genome sequence of Haemophilus somnus (Histophilus somni) strain 129Pt and comparison to Haemophilus ducreyi 35000HP and Haemophilus influenzae Rd.</title>
        <authorList>
            <person name="Challacombe J.F."/>
            <person name="Duncan A.J."/>
            <person name="Brettin T.S."/>
            <person name="Bruce D."/>
            <person name="Chertkov O."/>
            <person name="Detter J.C."/>
            <person name="Han C.S."/>
            <person name="Misra M."/>
            <person name="Richardson P."/>
            <person name="Tapia R."/>
            <person name="Thayer N."/>
            <person name="Xie G."/>
            <person name="Inzana T.J."/>
        </authorList>
    </citation>
    <scope>NUCLEOTIDE SEQUENCE [LARGE SCALE GENOMIC DNA]</scope>
    <source>
        <strain>129Pt</strain>
    </source>
</reference>
<sequence length="432" mass="47192">MGKSVVVLGAQWGDEGKGKIVDLLTDRVKYVVRYQGGHNAGHTLIINGEKTVLRLIPSGILRENVTCLIGNGVVLSPTALMQEMGELESRGINVRERLLISEACPLILPYHVAMDKARESALGNKAIGTTGRGIGPAYEDKVARRGLRVGDLFDKELFAEKLKNILDYYNFQLVHYYKAEAVDYQKTLDEVFAVADIITAMVADVSTILDIARKKGDNILFEGAQGTMLDIDQGTYPYVTSSNTTAGGVSTGAGFGPRHIDYVLGIIKAYCTRVGGGPFTTELFDDVGAEIARKGNEFGAVTGRPRRCGWFDAVAIKRAIQTNSISGFCMTKLDVLDGFHEIKICVGYKMPNGEIAEYAPLAAKDWEGVEPIYETLPGWQENTFGITDVNQLPENTRNYIKRIEEVTGVPIAILSTGPDRVETMILNDPFAV</sequence>
<gene>
    <name evidence="1" type="primary">purA</name>
    <name type="ordered locus">HS_1328</name>
</gene>
<accession>Q0I4Q5</accession>
<keyword id="KW-0963">Cytoplasm</keyword>
<keyword id="KW-0342">GTP-binding</keyword>
<keyword id="KW-0436">Ligase</keyword>
<keyword id="KW-0460">Magnesium</keyword>
<keyword id="KW-0479">Metal-binding</keyword>
<keyword id="KW-0547">Nucleotide-binding</keyword>
<keyword id="KW-0658">Purine biosynthesis</keyword>